<organism>
    <name type="scientific">Maridesulfovibrio salexigens (strain ATCC 14822 / DSM 2638 / NCIMB 8403 / VKM B-1763)</name>
    <name type="common">Desulfovibrio salexigens</name>
    <dbReference type="NCBI Taxonomy" id="526222"/>
    <lineage>
        <taxon>Bacteria</taxon>
        <taxon>Pseudomonadati</taxon>
        <taxon>Thermodesulfobacteriota</taxon>
        <taxon>Desulfovibrionia</taxon>
        <taxon>Desulfovibrionales</taxon>
        <taxon>Desulfovibrionaceae</taxon>
        <taxon>Maridesulfovibrio</taxon>
    </lineage>
</organism>
<feature type="chain" id="PRO_1000215001" description="Large ribosomal subunit protein bL17">
    <location>
        <begin position="1"/>
        <end position="141"/>
    </location>
</feature>
<proteinExistence type="inferred from homology"/>
<reference key="1">
    <citation type="submission" date="2009-06" db="EMBL/GenBank/DDBJ databases">
        <title>Complete sequence of Desulfovibrio salexigens DSM 2638.</title>
        <authorList>
            <consortium name="US DOE Joint Genome Institute"/>
            <person name="Lucas S."/>
            <person name="Copeland A."/>
            <person name="Lapidus A."/>
            <person name="Glavina del Rio T."/>
            <person name="Tice H."/>
            <person name="Bruce D."/>
            <person name="Goodwin L."/>
            <person name="Pitluck S."/>
            <person name="Munk A.C."/>
            <person name="Brettin T."/>
            <person name="Detter J.C."/>
            <person name="Han C."/>
            <person name="Tapia R."/>
            <person name="Larimer F."/>
            <person name="Land M."/>
            <person name="Hauser L."/>
            <person name="Kyrpides N."/>
            <person name="Anderson I."/>
            <person name="Wall J.D."/>
            <person name="Arkin A.P."/>
            <person name="Dehal P."/>
            <person name="Chivian D."/>
            <person name="Giles B."/>
            <person name="Hazen T.C."/>
        </authorList>
    </citation>
    <scope>NUCLEOTIDE SEQUENCE [LARGE SCALE GENOMIC DNA]</scope>
    <source>
        <strain>ATCC 14822 / DSM 2638 / NCIMB 8403 / VKM B-1763</strain>
    </source>
</reference>
<gene>
    <name evidence="1" type="primary">rplQ</name>
    <name type="ordered locus">Desal_1212</name>
</gene>
<sequence>MRHKKSGRKFNRSASHRKAMLRNMVRSLLTYEHIRTTEPKAKELRSSCEKLITLALRNDLHSRRLAYKTLENHGLVKRLFDEIGPRYEGGGGGYTRIIKLAEPRKGDCAPMCIIELTKRAEAPAEEAAATTEAPAEEAQEA</sequence>
<protein>
    <recommendedName>
        <fullName evidence="1">Large ribosomal subunit protein bL17</fullName>
    </recommendedName>
    <alternativeName>
        <fullName evidence="2">50S ribosomal protein L17</fullName>
    </alternativeName>
</protein>
<dbReference type="EMBL" id="CP001649">
    <property type="protein sequence ID" value="ACS79275.1"/>
    <property type="molecule type" value="Genomic_DNA"/>
</dbReference>
<dbReference type="RefSeq" id="WP_015851093.1">
    <property type="nucleotide sequence ID" value="NC_012881.1"/>
</dbReference>
<dbReference type="SMR" id="C6C1B2"/>
<dbReference type="STRING" id="526222.Desal_1212"/>
<dbReference type="KEGG" id="dsa:Desal_1212"/>
<dbReference type="eggNOG" id="COG0203">
    <property type="taxonomic scope" value="Bacteria"/>
</dbReference>
<dbReference type="HOGENOM" id="CLU_074407_2_0_7"/>
<dbReference type="OrthoDB" id="9809073at2"/>
<dbReference type="Proteomes" id="UP000002601">
    <property type="component" value="Chromosome"/>
</dbReference>
<dbReference type="GO" id="GO:0022625">
    <property type="term" value="C:cytosolic large ribosomal subunit"/>
    <property type="evidence" value="ECO:0007669"/>
    <property type="project" value="TreeGrafter"/>
</dbReference>
<dbReference type="GO" id="GO:0003735">
    <property type="term" value="F:structural constituent of ribosome"/>
    <property type="evidence" value="ECO:0007669"/>
    <property type="project" value="InterPro"/>
</dbReference>
<dbReference type="GO" id="GO:0006412">
    <property type="term" value="P:translation"/>
    <property type="evidence" value="ECO:0007669"/>
    <property type="project" value="UniProtKB-UniRule"/>
</dbReference>
<dbReference type="FunFam" id="3.90.1030.10:FF:000001">
    <property type="entry name" value="50S ribosomal protein L17"/>
    <property type="match status" value="1"/>
</dbReference>
<dbReference type="Gene3D" id="3.90.1030.10">
    <property type="entry name" value="Ribosomal protein L17"/>
    <property type="match status" value="1"/>
</dbReference>
<dbReference type="HAMAP" id="MF_01368">
    <property type="entry name" value="Ribosomal_bL17"/>
    <property type="match status" value="1"/>
</dbReference>
<dbReference type="InterPro" id="IPR000456">
    <property type="entry name" value="Ribosomal_bL17"/>
</dbReference>
<dbReference type="InterPro" id="IPR036373">
    <property type="entry name" value="Ribosomal_bL17_sf"/>
</dbReference>
<dbReference type="NCBIfam" id="TIGR00059">
    <property type="entry name" value="L17"/>
    <property type="match status" value="1"/>
</dbReference>
<dbReference type="PANTHER" id="PTHR14413:SF16">
    <property type="entry name" value="LARGE RIBOSOMAL SUBUNIT PROTEIN BL17M"/>
    <property type="match status" value="1"/>
</dbReference>
<dbReference type="PANTHER" id="PTHR14413">
    <property type="entry name" value="RIBOSOMAL PROTEIN L17"/>
    <property type="match status" value="1"/>
</dbReference>
<dbReference type="Pfam" id="PF01196">
    <property type="entry name" value="Ribosomal_L17"/>
    <property type="match status" value="1"/>
</dbReference>
<dbReference type="SUPFAM" id="SSF64263">
    <property type="entry name" value="Prokaryotic ribosomal protein L17"/>
    <property type="match status" value="1"/>
</dbReference>
<comment type="subunit">
    <text evidence="1">Part of the 50S ribosomal subunit. Contacts protein L32.</text>
</comment>
<comment type="similarity">
    <text evidence="1">Belongs to the bacterial ribosomal protein bL17 family.</text>
</comment>
<keyword id="KW-1185">Reference proteome</keyword>
<keyword id="KW-0687">Ribonucleoprotein</keyword>
<keyword id="KW-0689">Ribosomal protein</keyword>
<evidence type="ECO:0000255" key="1">
    <source>
        <dbReference type="HAMAP-Rule" id="MF_01368"/>
    </source>
</evidence>
<evidence type="ECO:0000305" key="2"/>
<name>RL17_MARSD</name>
<accession>C6C1B2</accession>